<name>HIS6_NEIG1</name>
<organism>
    <name type="scientific">Neisseria gonorrhoeae (strain ATCC 700825 / FA 1090)</name>
    <dbReference type="NCBI Taxonomy" id="242231"/>
    <lineage>
        <taxon>Bacteria</taxon>
        <taxon>Pseudomonadati</taxon>
        <taxon>Pseudomonadota</taxon>
        <taxon>Betaproteobacteria</taxon>
        <taxon>Neisseriales</taxon>
        <taxon>Neisseriaceae</taxon>
        <taxon>Neisseria</taxon>
    </lineage>
</organism>
<evidence type="ECO:0000255" key="1">
    <source>
        <dbReference type="HAMAP-Rule" id="MF_01013"/>
    </source>
</evidence>
<protein>
    <recommendedName>
        <fullName evidence="1">Imidazole glycerol phosphate synthase subunit HisF</fullName>
        <ecNumber evidence="1">4.3.2.10</ecNumber>
    </recommendedName>
    <alternativeName>
        <fullName evidence="1">IGP synthase cyclase subunit</fullName>
    </alternativeName>
    <alternativeName>
        <fullName evidence="1">IGP synthase subunit HisF</fullName>
    </alternativeName>
    <alternativeName>
        <fullName evidence="1">ImGP synthase subunit HisF</fullName>
        <shortName evidence="1">IGPS subunit HisF</shortName>
    </alternativeName>
</protein>
<feature type="chain" id="PRO_0000142186" description="Imidazole glycerol phosphate synthase subunit HisF">
    <location>
        <begin position="1"/>
        <end position="255"/>
    </location>
</feature>
<feature type="active site" evidence="1">
    <location>
        <position position="12"/>
    </location>
</feature>
<feature type="active site" evidence="1">
    <location>
        <position position="131"/>
    </location>
</feature>
<reference key="1">
    <citation type="submission" date="2003-03" db="EMBL/GenBank/DDBJ databases">
        <title>The complete genome sequence of Neisseria gonorrhoeae.</title>
        <authorList>
            <person name="Lewis L.A."/>
            <person name="Gillaspy A.F."/>
            <person name="McLaughlin R.E."/>
            <person name="Gipson M."/>
            <person name="Ducey T.F."/>
            <person name="Ownbey T."/>
            <person name="Hartman K."/>
            <person name="Nydick C."/>
            <person name="Carson M.B."/>
            <person name="Vaughn J."/>
            <person name="Thomson C."/>
            <person name="Song L."/>
            <person name="Lin S."/>
            <person name="Yuan X."/>
            <person name="Najar F."/>
            <person name="Zhan M."/>
            <person name="Ren Q."/>
            <person name="Zhu H."/>
            <person name="Qi S."/>
            <person name="Kenton S.M."/>
            <person name="Lai H."/>
            <person name="White J.D."/>
            <person name="Clifton S."/>
            <person name="Roe B.A."/>
            <person name="Dyer D.W."/>
        </authorList>
    </citation>
    <scope>NUCLEOTIDE SEQUENCE [LARGE SCALE GENOMIC DNA]</scope>
    <source>
        <strain>ATCC 700825 / FA 1090</strain>
    </source>
</reference>
<dbReference type="EC" id="4.3.2.10" evidence="1"/>
<dbReference type="EMBL" id="AE004969">
    <property type="protein sequence ID" value="AAW88964.1"/>
    <property type="molecule type" value="Genomic_DNA"/>
</dbReference>
<dbReference type="RefSeq" id="WP_003690707.1">
    <property type="nucleotide sequence ID" value="NC_002946.2"/>
</dbReference>
<dbReference type="RefSeq" id="YP_207376.1">
    <property type="nucleotide sequence ID" value="NC_002946.2"/>
</dbReference>
<dbReference type="SMR" id="Q5FA23"/>
<dbReference type="STRING" id="242231.NGO_0211"/>
<dbReference type="GeneID" id="66752542"/>
<dbReference type="KEGG" id="ngo:NGO_0211"/>
<dbReference type="PATRIC" id="fig|242231.10.peg.262"/>
<dbReference type="HOGENOM" id="CLU_048577_4_0_4"/>
<dbReference type="UniPathway" id="UPA00031">
    <property type="reaction ID" value="UER00010"/>
</dbReference>
<dbReference type="Proteomes" id="UP000000535">
    <property type="component" value="Chromosome"/>
</dbReference>
<dbReference type="GO" id="GO:0005737">
    <property type="term" value="C:cytoplasm"/>
    <property type="evidence" value="ECO:0007669"/>
    <property type="project" value="UniProtKB-SubCell"/>
</dbReference>
<dbReference type="GO" id="GO:0000107">
    <property type="term" value="F:imidazoleglycerol-phosphate synthase activity"/>
    <property type="evidence" value="ECO:0007669"/>
    <property type="project" value="UniProtKB-UniRule"/>
</dbReference>
<dbReference type="GO" id="GO:0016829">
    <property type="term" value="F:lyase activity"/>
    <property type="evidence" value="ECO:0007669"/>
    <property type="project" value="UniProtKB-KW"/>
</dbReference>
<dbReference type="GO" id="GO:0000105">
    <property type="term" value="P:L-histidine biosynthetic process"/>
    <property type="evidence" value="ECO:0007669"/>
    <property type="project" value="UniProtKB-UniRule"/>
</dbReference>
<dbReference type="CDD" id="cd04731">
    <property type="entry name" value="HisF"/>
    <property type="match status" value="1"/>
</dbReference>
<dbReference type="FunFam" id="3.20.20.70:FF:000006">
    <property type="entry name" value="Imidazole glycerol phosphate synthase subunit HisF"/>
    <property type="match status" value="1"/>
</dbReference>
<dbReference type="Gene3D" id="3.20.20.70">
    <property type="entry name" value="Aldolase class I"/>
    <property type="match status" value="1"/>
</dbReference>
<dbReference type="HAMAP" id="MF_01013">
    <property type="entry name" value="HisF"/>
    <property type="match status" value="1"/>
</dbReference>
<dbReference type="InterPro" id="IPR013785">
    <property type="entry name" value="Aldolase_TIM"/>
</dbReference>
<dbReference type="InterPro" id="IPR006062">
    <property type="entry name" value="His_biosynth"/>
</dbReference>
<dbReference type="InterPro" id="IPR004651">
    <property type="entry name" value="HisF"/>
</dbReference>
<dbReference type="InterPro" id="IPR050064">
    <property type="entry name" value="IGPS_HisA/HisF"/>
</dbReference>
<dbReference type="InterPro" id="IPR011060">
    <property type="entry name" value="RibuloseP-bd_barrel"/>
</dbReference>
<dbReference type="NCBIfam" id="TIGR00735">
    <property type="entry name" value="hisF"/>
    <property type="match status" value="1"/>
</dbReference>
<dbReference type="PANTHER" id="PTHR21235:SF2">
    <property type="entry name" value="IMIDAZOLE GLYCEROL PHOSPHATE SYNTHASE HISHF"/>
    <property type="match status" value="1"/>
</dbReference>
<dbReference type="PANTHER" id="PTHR21235">
    <property type="entry name" value="IMIDAZOLE GLYCEROL PHOSPHATE SYNTHASE SUBUNIT HISF/H IGP SYNTHASE SUBUNIT HISF/H"/>
    <property type="match status" value="1"/>
</dbReference>
<dbReference type="Pfam" id="PF00977">
    <property type="entry name" value="His_biosynth"/>
    <property type="match status" value="1"/>
</dbReference>
<dbReference type="SUPFAM" id="SSF51366">
    <property type="entry name" value="Ribulose-phoshate binding barrel"/>
    <property type="match status" value="1"/>
</dbReference>
<accession>Q5FA23</accession>
<keyword id="KW-0028">Amino-acid biosynthesis</keyword>
<keyword id="KW-0963">Cytoplasm</keyword>
<keyword id="KW-0368">Histidine biosynthesis</keyword>
<keyword id="KW-0456">Lyase</keyword>
<keyword id="KW-1185">Reference proteome</keyword>
<gene>
    <name evidence="1" type="primary">hisF</name>
    <name type="ordered locus">NGO_0211</name>
</gene>
<proteinExistence type="inferred from homology"/>
<sequence>MALAKRIIPCLDVKDGRVVKGVNFIGLRDAGDPVEAAKRYNGEGADELTFLDITASSDNRDTILHIIEEVAGQVFIPLTVGGGVRTVADIRRLLNAGADKVSINTAAVTRPDLINEAAGFFGSQAIVAAVDAKAVNPENTRWEIFTHGGRNPTGLDAVEWAVEMQKRGAGEILLTGMDRDGTKQGFNLPLTRAVAEAVDIPVIASGGVGNVRHLIEGITEGKADAVLAAGIFHFGEIAIREAKRTMREAGIEVRL</sequence>
<comment type="function">
    <text evidence="1">IGPS catalyzes the conversion of PRFAR and glutamine to IGP, AICAR and glutamate. The HisF subunit catalyzes the cyclization activity that produces IGP and AICAR from PRFAR using the ammonia provided by the HisH subunit.</text>
</comment>
<comment type="catalytic activity">
    <reaction evidence="1">
        <text>5-[(5-phospho-1-deoxy-D-ribulos-1-ylimino)methylamino]-1-(5-phospho-beta-D-ribosyl)imidazole-4-carboxamide + L-glutamine = D-erythro-1-(imidazol-4-yl)glycerol 3-phosphate + 5-amino-1-(5-phospho-beta-D-ribosyl)imidazole-4-carboxamide + L-glutamate + H(+)</text>
        <dbReference type="Rhea" id="RHEA:24793"/>
        <dbReference type="ChEBI" id="CHEBI:15378"/>
        <dbReference type="ChEBI" id="CHEBI:29985"/>
        <dbReference type="ChEBI" id="CHEBI:58278"/>
        <dbReference type="ChEBI" id="CHEBI:58359"/>
        <dbReference type="ChEBI" id="CHEBI:58475"/>
        <dbReference type="ChEBI" id="CHEBI:58525"/>
        <dbReference type="EC" id="4.3.2.10"/>
    </reaction>
</comment>
<comment type="pathway">
    <text evidence="1">Amino-acid biosynthesis; L-histidine biosynthesis; L-histidine from 5-phospho-alpha-D-ribose 1-diphosphate: step 5/9.</text>
</comment>
<comment type="subunit">
    <text evidence="1">Heterodimer of HisH and HisF.</text>
</comment>
<comment type="subcellular location">
    <subcellularLocation>
        <location evidence="1">Cytoplasm</location>
    </subcellularLocation>
</comment>
<comment type="similarity">
    <text evidence="1">Belongs to the HisA/HisF family.</text>
</comment>